<protein>
    <recommendedName>
        <fullName>Serine carboxypeptidase-like 4</fullName>
        <ecNumber>3.4.16.-</ecNumber>
    </recommendedName>
</protein>
<comment type="function">
    <text evidence="1">Probable carboxypeptidase.</text>
</comment>
<comment type="subcellular location">
    <subcellularLocation>
        <location evidence="4">Secreted</location>
    </subcellularLocation>
</comment>
<comment type="tissue specificity">
    <text evidence="3">Ubiquitous.</text>
</comment>
<comment type="similarity">
    <text evidence="4">Belongs to the peptidase S10 family.</text>
</comment>
<accession>Q9CAU4</accession>
<feature type="signal peptide" evidence="2">
    <location>
        <begin position="1"/>
        <end position="29"/>
    </location>
</feature>
<feature type="chain" id="PRO_0000274618" description="Serine carboxypeptidase-like 4">
    <location>
        <begin position="30"/>
        <end position="441"/>
    </location>
</feature>
<feature type="active site" evidence="1">
    <location>
        <position position="184"/>
    </location>
</feature>
<feature type="active site" evidence="1">
    <location>
        <position position="366"/>
    </location>
</feature>
<feature type="active site" evidence="1">
    <location>
        <position position="419"/>
    </location>
</feature>
<feature type="glycosylation site" description="N-linked (GlcNAc...) asparagine" evidence="2">
    <location>
        <position position="109"/>
    </location>
</feature>
<feature type="glycosylation site" description="N-linked (GlcNAc...) asparagine" evidence="2">
    <location>
        <position position="350"/>
    </location>
</feature>
<feature type="glycosylation site" description="N-linked (GlcNAc...) asparagine" evidence="2">
    <location>
        <position position="382"/>
    </location>
</feature>
<feature type="disulfide bond" evidence="1">
    <location>
        <begin position="88"/>
        <end position="331"/>
    </location>
</feature>
<feature type="disulfide bond" evidence="1">
    <location>
        <begin position="252"/>
        <end position="266"/>
    </location>
</feature>
<feature type="disulfide bond" evidence="1">
    <location>
        <begin position="290"/>
        <end position="297"/>
    </location>
</feature>
<name>SCP4_ARATH</name>
<proteinExistence type="evidence at transcript level"/>
<reference key="1">
    <citation type="journal article" date="2000" name="Nature">
        <title>Sequence and analysis of chromosome 1 of the plant Arabidopsis thaliana.</title>
        <authorList>
            <person name="Theologis A."/>
            <person name="Ecker J.R."/>
            <person name="Palm C.J."/>
            <person name="Federspiel N.A."/>
            <person name="Kaul S."/>
            <person name="White O."/>
            <person name="Alonso J."/>
            <person name="Altafi H."/>
            <person name="Araujo R."/>
            <person name="Bowman C.L."/>
            <person name="Brooks S.Y."/>
            <person name="Buehler E."/>
            <person name="Chan A."/>
            <person name="Chao Q."/>
            <person name="Chen H."/>
            <person name="Cheuk R.F."/>
            <person name="Chin C.W."/>
            <person name="Chung M.K."/>
            <person name="Conn L."/>
            <person name="Conway A.B."/>
            <person name="Conway A.R."/>
            <person name="Creasy T.H."/>
            <person name="Dewar K."/>
            <person name="Dunn P."/>
            <person name="Etgu P."/>
            <person name="Feldblyum T.V."/>
            <person name="Feng J.-D."/>
            <person name="Fong B."/>
            <person name="Fujii C.Y."/>
            <person name="Gill J.E."/>
            <person name="Goldsmith A.D."/>
            <person name="Haas B."/>
            <person name="Hansen N.F."/>
            <person name="Hughes B."/>
            <person name="Huizar L."/>
            <person name="Hunter J.L."/>
            <person name="Jenkins J."/>
            <person name="Johnson-Hopson C."/>
            <person name="Khan S."/>
            <person name="Khaykin E."/>
            <person name="Kim C.J."/>
            <person name="Koo H.L."/>
            <person name="Kremenetskaia I."/>
            <person name="Kurtz D.B."/>
            <person name="Kwan A."/>
            <person name="Lam B."/>
            <person name="Langin-Hooper S."/>
            <person name="Lee A."/>
            <person name="Lee J.M."/>
            <person name="Lenz C.A."/>
            <person name="Li J.H."/>
            <person name="Li Y.-P."/>
            <person name="Lin X."/>
            <person name="Liu S.X."/>
            <person name="Liu Z.A."/>
            <person name="Luros J.S."/>
            <person name="Maiti R."/>
            <person name="Marziali A."/>
            <person name="Militscher J."/>
            <person name="Miranda M."/>
            <person name="Nguyen M."/>
            <person name="Nierman W.C."/>
            <person name="Osborne B.I."/>
            <person name="Pai G."/>
            <person name="Peterson J."/>
            <person name="Pham P.K."/>
            <person name="Rizzo M."/>
            <person name="Rooney T."/>
            <person name="Rowley D."/>
            <person name="Sakano H."/>
            <person name="Salzberg S.L."/>
            <person name="Schwartz J.R."/>
            <person name="Shinn P."/>
            <person name="Southwick A.M."/>
            <person name="Sun H."/>
            <person name="Tallon L.J."/>
            <person name="Tambunga G."/>
            <person name="Toriumi M.J."/>
            <person name="Town C.D."/>
            <person name="Utterback T."/>
            <person name="Van Aken S."/>
            <person name="Vaysberg M."/>
            <person name="Vysotskaia V.S."/>
            <person name="Walker M."/>
            <person name="Wu D."/>
            <person name="Yu G."/>
            <person name="Fraser C.M."/>
            <person name="Venter J.C."/>
            <person name="Davis R.W."/>
        </authorList>
    </citation>
    <scope>NUCLEOTIDE SEQUENCE [LARGE SCALE GENOMIC DNA]</scope>
    <source>
        <strain>cv. Columbia</strain>
    </source>
</reference>
<reference key="2">
    <citation type="journal article" date="2017" name="Plant J.">
        <title>Araport11: a complete reannotation of the Arabidopsis thaliana reference genome.</title>
        <authorList>
            <person name="Cheng C.Y."/>
            <person name="Krishnakumar V."/>
            <person name="Chan A.P."/>
            <person name="Thibaud-Nissen F."/>
            <person name="Schobel S."/>
            <person name="Town C.D."/>
        </authorList>
    </citation>
    <scope>GENOME REANNOTATION</scope>
    <source>
        <strain>cv. Columbia</strain>
    </source>
</reference>
<reference key="3">
    <citation type="journal article" date="2005" name="Plant Physiol.">
        <title>An expression and bioinformatics analysis of the Arabidopsis serine carboxypeptidase-like gene family.</title>
        <authorList>
            <person name="Fraser C.M."/>
            <person name="Rider L.W."/>
            <person name="Chapple C."/>
        </authorList>
    </citation>
    <scope>GENE FAMILY</scope>
    <scope>TISSUE SPECIFICITY</scope>
    <scope>NOMENCLATURE</scope>
</reference>
<keyword id="KW-0121">Carboxypeptidase</keyword>
<keyword id="KW-1015">Disulfide bond</keyword>
<keyword id="KW-0325">Glycoprotein</keyword>
<keyword id="KW-0378">Hydrolase</keyword>
<keyword id="KW-0645">Protease</keyword>
<keyword id="KW-1185">Reference proteome</keyword>
<keyword id="KW-0964">Secreted</keyword>
<keyword id="KW-0732">Signal</keyword>
<organism>
    <name type="scientific">Arabidopsis thaliana</name>
    <name type="common">Mouse-ear cress</name>
    <dbReference type="NCBI Taxonomy" id="3702"/>
    <lineage>
        <taxon>Eukaryota</taxon>
        <taxon>Viridiplantae</taxon>
        <taxon>Streptophyta</taxon>
        <taxon>Embryophyta</taxon>
        <taxon>Tracheophyta</taxon>
        <taxon>Spermatophyta</taxon>
        <taxon>Magnoliopsida</taxon>
        <taxon>eudicotyledons</taxon>
        <taxon>Gunneridae</taxon>
        <taxon>Pentapetalae</taxon>
        <taxon>rosids</taxon>
        <taxon>malvids</taxon>
        <taxon>Brassicales</taxon>
        <taxon>Brassicaceae</taxon>
        <taxon>Camelineae</taxon>
        <taxon>Arabidopsis</taxon>
    </lineage>
</organism>
<sequence>MANNNVYSVLKSLLLLLHLVFLSKQHVDSASIVKFLPGFEGPLPFELETGYIGVGEEEEVQLFYYFIKSERNPKEDPLLLWLTGGPGCSAISGLLYQNGPLAMKLDVYNGTLPSLVSTTYSWTKTSSMIFLDQPVGTGFSYSRTQLFNKPSDTGEAKRIHEFLQKWLGKHQEFSSNPFYVGGDSYSGLVVPATVQEISKGNCQCCNRPINLQGYVLGNPLTDCVYDCNYRVPFAHKMALISDELYESLKRTCRGEYVNVHPHDTECLKFVEEFNKLTNRVCERHILHSCCETETPSCYSYRFMLTTYWANDETVRKALQINKESIGEWTRCYRGIPYNHDIKSSVPYHMNNSIDGYRSLIYSGDHDIQVPFLGTQAWIRSLNYSIIDDWRPWMIKDQIAGYTTSYVNKMTFATVTGGGHTAEFTPKETFMMFQRWINGQPL</sequence>
<dbReference type="EC" id="3.4.16.-"/>
<dbReference type="EMBL" id="AC010556">
    <property type="protein sequence ID" value="AAG52126.1"/>
    <property type="molecule type" value="Genomic_DNA"/>
</dbReference>
<dbReference type="EMBL" id="CP002684">
    <property type="protein sequence ID" value="AEE35440.1"/>
    <property type="molecule type" value="Genomic_DNA"/>
</dbReference>
<dbReference type="RefSeq" id="NP_177474.1">
    <property type="nucleotide sequence ID" value="NM_105990.2"/>
</dbReference>
<dbReference type="SMR" id="Q9CAU4"/>
<dbReference type="FunCoup" id="Q9CAU4">
    <property type="interactions" value="1277"/>
</dbReference>
<dbReference type="STRING" id="3702.Q9CAU4"/>
<dbReference type="ESTHER" id="arath-SCP4">
    <property type="family name" value="Carboxypeptidase_S10"/>
</dbReference>
<dbReference type="MEROPS" id="S10.A06"/>
<dbReference type="GlyCosmos" id="Q9CAU4">
    <property type="glycosylation" value="3 sites, No reported glycans"/>
</dbReference>
<dbReference type="GlyGen" id="Q9CAU4">
    <property type="glycosylation" value="3 sites"/>
</dbReference>
<dbReference type="PaxDb" id="3702-AT1G73310.1"/>
<dbReference type="ProteomicsDB" id="232706"/>
<dbReference type="EnsemblPlants" id="AT1G73310.1">
    <property type="protein sequence ID" value="AT1G73310.1"/>
    <property type="gene ID" value="AT1G73310"/>
</dbReference>
<dbReference type="GeneID" id="843665"/>
<dbReference type="Gramene" id="AT1G73310.1">
    <property type="protein sequence ID" value="AT1G73310.1"/>
    <property type="gene ID" value="AT1G73310"/>
</dbReference>
<dbReference type="KEGG" id="ath:AT1G73310"/>
<dbReference type="Araport" id="AT1G73310"/>
<dbReference type="TAIR" id="AT1G73310">
    <property type="gene designation" value="SCPL4"/>
</dbReference>
<dbReference type="eggNOG" id="KOG1282">
    <property type="taxonomic scope" value="Eukaryota"/>
</dbReference>
<dbReference type="HOGENOM" id="CLU_008523_0_1_1"/>
<dbReference type="InParanoid" id="Q9CAU4"/>
<dbReference type="OMA" id="IISCRNA"/>
<dbReference type="PhylomeDB" id="Q9CAU4"/>
<dbReference type="BioCyc" id="ARA:AT1G73310-MONOMER"/>
<dbReference type="PRO" id="PR:Q9CAU4"/>
<dbReference type="Proteomes" id="UP000006548">
    <property type="component" value="Chromosome 1"/>
</dbReference>
<dbReference type="ExpressionAtlas" id="Q9CAU4">
    <property type="expression patterns" value="baseline and differential"/>
</dbReference>
<dbReference type="GO" id="GO:0005576">
    <property type="term" value="C:extracellular region"/>
    <property type="evidence" value="ECO:0007669"/>
    <property type="project" value="UniProtKB-SubCell"/>
</dbReference>
<dbReference type="GO" id="GO:0004185">
    <property type="term" value="F:serine-type carboxypeptidase activity"/>
    <property type="evidence" value="ECO:0007669"/>
    <property type="project" value="InterPro"/>
</dbReference>
<dbReference type="GO" id="GO:0006508">
    <property type="term" value="P:proteolysis"/>
    <property type="evidence" value="ECO:0007669"/>
    <property type="project" value="UniProtKB-KW"/>
</dbReference>
<dbReference type="FunFam" id="3.40.50.1820:FF:000148">
    <property type="entry name" value="Serine carboxypeptidase-like 11"/>
    <property type="match status" value="1"/>
</dbReference>
<dbReference type="Gene3D" id="3.40.50.1820">
    <property type="entry name" value="alpha/beta hydrolase"/>
    <property type="match status" value="1"/>
</dbReference>
<dbReference type="InterPro" id="IPR029058">
    <property type="entry name" value="AB_hydrolase_fold"/>
</dbReference>
<dbReference type="InterPro" id="IPR001563">
    <property type="entry name" value="Peptidase_S10"/>
</dbReference>
<dbReference type="PANTHER" id="PTHR11802:SF457">
    <property type="entry name" value="SERINE CARBOXYPEPTIDASE-LIKE 1-RELATED"/>
    <property type="match status" value="1"/>
</dbReference>
<dbReference type="PANTHER" id="PTHR11802">
    <property type="entry name" value="SERINE PROTEASE FAMILY S10 SERINE CARBOXYPEPTIDASE"/>
    <property type="match status" value="1"/>
</dbReference>
<dbReference type="Pfam" id="PF00450">
    <property type="entry name" value="Peptidase_S10"/>
    <property type="match status" value="1"/>
</dbReference>
<dbReference type="PRINTS" id="PR00724">
    <property type="entry name" value="CRBOXYPTASEC"/>
</dbReference>
<dbReference type="SUPFAM" id="SSF53474">
    <property type="entry name" value="alpha/beta-Hydrolases"/>
    <property type="match status" value="1"/>
</dbReference>
<gene>
    <name type="primary">SCPL4</name>
    <name type="ordered locus">At1g73310</name>
    <name type="ORF">T18K17.2</name>
</gene>
<evidence type="ECO:0000250" key="1"/>
<evidence type="ECO:0000255" key="2"/>
<evidence type="ECO:0000269" key="3">
    <source>
    </source>
</evidence>
<evidence type="ECO:0000305" key="4"/>